<accession>Q9XU98</accession>
<accession>P91865</accession>
<keyword id="KW-0025">Alternative splicing</keyword>
<keyword id="KW-1003">Cell membrane</keyword>
<keyword id="KW-0472">Membrane</keyword>
<keyword id="KW-1185">Reference proteome</keyword>
<keyword id="KW-0732">Signal</keyword>
<keyword id="KW-0812">Transmembrane</keyword>
<keyword id="KW-1133">Transmembrane helix</keyword>
<protein>
    <recommendedName>
        <fullName>Protein eva-1</fullName>
    </recommendedName>
    <alternativeName>
        <fullName>Enhancer of ventral-axon guidance defects of unc-40 mutants</fullName>
    </alternativeName>
</protein>
<organism>
    <name type="scientific">Caenorhabditis elegans</name>
    <dbReference type="NCBI Taxonomy" id="6239"/>
    <lineage>
        <taxon>Eukaryota</taxon>
        <taxon>Metazoa</taxon>
        <taxon>Ecdysozoa</taxon>
        <taxon>Nematoda</taxon>
        <taxon>Chromadorea</taxon>
        <taxon>Rhabditida</taxon>
        <taxon>Rhabditina</taxon>
        <taxon>Rhabditomorpha</taxon>
        <taxon>Rhabditoidea</taxon>
        <taxon>Rhabditidae</taxon>
        <taxon>Peloderinae</taxon>
        <taxon>Caenorhabditis</taxon>
    </lineage>
</organism>
<evidence type="ECO:0000255" key="1"/>
<evidence type="ECO:0000255" key="2">
    <source>
        <dbReference type="PROSITE-ProRule" id="PRU00260"/>
    </source>
</evidence>
<evidence type="ECO:0000256" key="3">
    <source>
        <dbReference type="SAM" id="MobiDB-lite"/>
    </source>
</evidence>
<evidence type="ECO:0000269" key="4">
    <source>
    </source>
</evidence>
<evidence type="ECO:0000269" key="5">
    <source>
    </source>
</evidence>
<evidence type="ECO:0000305" key="6"/>
<name>EVA1_CAEEL</name>
<sequence>MNMHIVSPVLLLFWFGIIVTDGKLKSGFIGGSHHHEVNPIEGILRESLRSNRVQACDGERITLSCPRNTQISVQTGFYGRVVPENQLCPPQAGRKHSEANLDPLSMIHHSSTCDVIQAHTRISELCDKRRKCTVVVDSNTFEDDPCPTTSKYLQMAYGCIPMSFDEETFCTPKPTDPPRPEIRLECREGRRLAVYSAQMKTSPQCDPETEIRHECVSDVLPQVLRQCHAKEGCTLKSDGIKGHCRHGHLHVVYVCVNEEIFSEEAIKGELTSLETYLKEADAMQKQDDERFFKDVNDKTQWERVVDSEPAKDPDVHQIANDASYVTHDEYRMEKQDPPPITERVEPNLVGVGHDLLQVVQFFKENKEKAVMCIVLAVSMAAIVVLSACIITRLCSSNKDSSRSSRRSRSRRSLETSKLVSSNYGGSITPQHMMQDIEDEQFLRFSMGSAATSNPHYSHYDF</sequence>
<dbReference type="EMBL" id="Z83107">
    <property type="protein sequence ID" value="CAB05503.2"/>
    <property type="molecule type" value="Genomic_DNA"/>
</dbReference>
<dbReference type="EMBL" id="Z83107">
    <property type="protein sequence ID" value="CAB05506.2"/>
    <property type="molecule type" value="Genomic_DNA"/>
</dbReference>
<dbReference type="PIR" id="T21628">
    <property type="entry name" value="T21628"/>
</dbReference>
<dbReference type="RefSeq" id="NP_001366909.1">
    <molecule id="Q9XU98-2"/>
    <property type="nucleotide sequence ID" value="NM_001381268.1"/>
</dbReference>
<dbReference type="RefSeq" id="NP_493590.2">
    <molecule id="Q9XU98-1"/>
    <property type="nucleotide sequence ID" value="NM_061189.7"/>
</dbReference>
<dbReference type="RefSeq" id="NP_493591.2">
    <property type="nucleotide sequence ID" value="NM_061190.4"/>
</dbReference>
<dbReference type="SMR" id="Q9XU98"/>
<dbReference type="BioGRID" id="38738">
    <property type="interactions" value="7"/>
</dbReference>
<dbReference type="DIP" id="DIP-25574N"/>
<dbReference type="FunCoup" id="Q9XU98">
    <property type="interactions" value="24"/>
</dbReference>
<dbReference type="IntAct" id="Q9XU98">
    <property type="interactions" value="1"/>
</dbReference>
<dbReference type="MINT" id="Q9XU98"/>
<dbReference type="STRING" id="6239.F32A7.3c.2"/>
<dbReference type="PaxDb" id="6239-F32A7.3a"/>
<dbReference type="EnsemblMetazoa" id="F32A7.3a.1">
    <molecule id="Q9XU98-1"/>
    <property type="protein sequence ID" value="F32A7.3a.1"/>
    <property type="gene ID" value="WBGene00009304"/>
</dbReference>
<dbReference type="EnsemblMetazoa" id="F32A7.3b.1">
    <molecule id="Q9XU98-2"/>
    <property type="protein sequence ID" value="F32A7.3b.1"/>
    <property type="gene ID" value="WBGene00009304"/>
</dbReference>
<dbReference type="EnsemblMetazoa" id="F32A7.3b.2">
    <molecule id="Q9XU98-2"/>
    <property type="protein sequence ID" value="F32A7.3b.2"/>
    <property type="gene ID" value="WBGene00009304"/>
</dbReference>
<dbReference type="EnsemblMetazoa" id="F32A7.3b.3">
    <molecule id="Q9XU98-2"/>
    <property type="protein sequence ID" value="F32A7.3b.3"/>
    <property type="gene ID" value="WBGene00009304"/>
</dbReference>
<dbReference type="EnsemblMetazoa" id="F32A7.3b.4">
    <molecule id="Q9XU98-2"/>
    <property type="protein sequence ID" value="F32A7.3b.4"/>
    <property type="gene ID" value="WBGene00009304"/>
</dbReference>
<dbReference type="GeneID" id="173355"/>
<dbReference type="KEGG" id="cel:CELE_F32A7.3"/>
<dbReference type="UCSC" id="F32A7.3a">
    <property type="organism name" value="c. elegans"/>
</dbReference>
<dbReference type="AGR" id="WB:WBGene00009304"/>
<dbReference type="CTD" id="173355"/>
<dbReference type="WormBase" id="F32A7.3a">
    <molecule id="Q9XU98-1"/>
    <property type="protein sequence ID" value="CE36144"/>
    <property type="gene ID" value="WBGene00009304"/>
    <property type="gene designation" value="eva-1"/>
</dbReference>
<dbReference type="WormBase" id="F32A7.3b">
    <molecule id="Q9XU98-2"/>
    <property type="protein sequence ID" value="CE36145"/>
    <property type="gene ID" value="WBGene00009304"/>
    <property type="gene designation" value="eva-1"/>
</dbReference>
<dbReference type="eggNOG" id="KOG4729">
    <property type="taxonomic scope" value="Eukaryota"/>
</dbReference>
<dbReference type="InParanoid" id="Q9XU98"/>
<dbReference type="OMA" id="HQLCPSR"/>
<dbReference type="OrthoDB" id="5970528at2759"/>
<dbReference type="PhylomeDB" id="Q9XU98"/>
<dbReference type="SignaLink" id="Q9XU98"/>
<dbReference type="PRO" id="PR:Q9XU98"/>
<dbReference type="Proteomes" id="UP000001940">
    <property type="component" value="Chromosome I"/>
</dbReference>
<dbReference type="Bgee" id="WBGene00009304">
    <property type="expression patterns" value="Expressed in pharyngeal muscle cell (C elegans) and 3 other cell types or tissues"/>
</dbReference>
<dbReference type="ExpressionAtlas" id="Q9XU98">
    <property type="expression patterns" value="baseline and differential"/>
</dbReference>
<dbReference type="GO" id="GO:0030054">
    <property type="term" value="C:cell junction"/>
    <property type="evidence" value="ECO:0007005"/>
    <property type="project" value="WormBase"/>
</dbReference>
<dbReference type="GO" id="GO:0031430">
    <property type="term" value="C:M band"/>
    <property type="evidence" value="ECO:0007005"/>
    <property type="project" value="WormBase"/>
</dbReference>
<dbReference type="GO" id="GO:0005886">
    <property type="term" value="C:plasma membrane"/>
    <property type="evidence" value="ECO:0007669"/>
    <property type="project" value="UniProtKB-SubCell"/>
</dbReference>
<dbReference type="GO" id="GO:0055120">
    <property type="term" value="C:striated muscle dense body"/>
    <property type="evidence" value="ECO:0007005"/>
    <property type="project" value="WormBase"/>
</dbReference>
<dbReference type="GO" id="GO:0030246">
    <property type="term" value="F:carbohydrate binding"/>
    <property type="evidence" value="ECO:0007669"/>
    <property type="project" value="InterPro"/>
</dbReference>
<dbReference type="CDD" id="cd22828">
    <property type="entry name" value="Gal_Rha_Lectin_EVA1_EVA1C_rpt1"/>
    <property type="match status" value="1"/>
</dbReference>
<dbReference type="CDD" id="cd22829">
    <property type="entry name" value="Gal_Rha_Lectin_EVA1_EVA1C_rpt2"/>
    <property type="match status" value="1"/>
</dbReference>
<dbReference type="FunFam" id="2.60.120.740:FF:000006">
    <property type="entry name" value="Protein eva-1 C"/>
    <property type="match status" value="1"/>
</dbReference>
<dbReference type="Gene3D" id="2.60.120.740">
    <property type="match status" value="1"/>
</dbReference>
<dbReference type="InterPro" id="IPR000922">
    <property type="entry name" value="Lectin_gal-bd_dom"/>
</dbReference>
<dbReference type="InterPro" id="IPR043159">
    <property type="entry name" value="Lectin_gal-bd_sf"/>
</dbReference>
<dbReference type="PANTHER" id="PTHR46780">
    <property type="entry name" value="PROTEIN EVA-1"/>
    <property type="match status" value="1"/>
</dbReference>
<dbReference type="Pfam" id="PF02140">
    <property type="entry name" value="SUEL_Lectin"/>
    <property type="match status" value="1"/>
</dbReference>
<dbReference type="PROSITE" id="PS50228">
    <property type="entry name" value="SUEL_LECTIN"/>
    <property type="match status" value="1"/>
</dbReference>
<feature type="signal peptide" evidence="1">
    <location>
        <begin position="1"/>
        <end position="22"/>
    </location>
</feature>
<feature type="chain" id="PRO_0000420839" description="Protein eva-1">
    <location>
        <begin position="23"/>
        <end position="461"/>
    </location>
</feature>
<feature type="transmembrane region" description="Helical" evidence="1">
    <location>
        <begin position="370"/>
        <end position="390"/>
    </location>
</feature>
<feature type="domain" description="SUEL-type lectin" evidence="2">
    <location>
        <begin position="55"/>
        <end position="160"/>
    </location>
</feature>
<feature type="region of interest" description="Disordered" evidence="3">
    <location>
        <begin position="397"/>
        <end position="429"/>
    </location>
</feature>
<feature type="compositionally biased region" description="Polar residues" evidence="3">
    <location>
        <begin position="415"/>
        <end position="429"/>
    </location>
</feature>
<feature type="splice variant" id="VSP_044684" description="In isoform 2." evidence="6">
    <location>
        <begin position="1"/>
        <end position="105"/>
    </location>
</feature>
<proteinExistence type="evidence at protein level"/>
<comment type="function">
    <text evidence="4 5">Acts as a receptor for slt-1 (PubMed:17901337). Required for the guidance of the AVM pioneer axon to the ventral nerve cord (PubMed:17901337). Acts as a unc-40 coreceptor to enhance the sensitivity of unc-40 to the madd-4 midline guidance cue to guide muscle arm extensions (muscle arms) and AVM mechanosensory axons towards the dorsoventral midline (PubMed:25122090).</text>
</comment>
<comment type="subunit">
    <text evidence="4 5">Interacts with sax-3 (PubMed:17901337). Interacts with slt-1 (PubMed:17901337, PubMed:25122090). Interacts (via the SUEL-type lectin domain) with madd-4 (PubMed:25122090). Interacts (via the transmembrane domain) with unc-40 (PubMed:25122090).</text>
</comment>
<comment type="subcellular location">
    <subcellularLocation>
        <location evidence="6">Cell membrane</location>
        <topology evidence="6">Single-pass membrane protein</topology>
    </subcellularLocation>
</comment>
<comment type="alternative products">
    <event type="alternative splicing"/>
    <isoform>
        <id>Q9XU98-1</id>
        <name>1</name>
        <sequence type="displayed"/>
    </isoform>
    <isoform>
        <id>Q9XU98-2</id>
        <name>2</name>
        <sequence type="described" ref="VSP_044684"/>
    </isoform>
</comment>
<comment type="developmental stage">
    <text evidence="4">Widely expressed in the developing nervous system during the period of embryogenesis. In first-larval-stage animals, strong expression is observed in ventral and dorsal nerve cords and in the PVM neurons but not in the AVM neurons.</text>
</comment>
<comment type="domain">
    <text evidence="5">The SUEL-type lectin domain, the transmembrane domain and the C-terminal region are required for the guidance of the muscle arm extensions to the midline neurons.</text>
</comment>
<comment type="similarity">
    <text evidence="6">Belongs to the EVA1 family.</text>
</comment>
<gene>
    <name type="primary">eva-1</name>
    <name type="ORF">F32A7.3</name>
</gene>
<reference key="1">
    <citation type="journal article" date="1998" name="Science">
        <title>Genome sequence of the nematode C. elegans: a platform for investigating biology.</title>
        <authorList>
            <consortium name="The C. elegans sequencing consortium"/>
        </authorList>
    </citation>
    <scope>NUCLEOTIDE SEQUENCE [LARGE SCALE GENOMIC DNA]</scope>
    <source>
        <strain>Bristol N2</strain>
    </source>
</reference>
<reference key="2">
    <citation type="journal article" date="2007" name="Science">
        <title>The slit receptor EVA-1 coactivates a SAX-3/Robo mediated guidance signal in C. elegans.</title>
        <authorList>
            <person name="Fujisawa K."/>
            <person name="Wrana J.L."/>
            <person name="Culotti J.G."/>
        </authorList>
    </citation>
    <scope>FUNCTION</scope>
    <scope>DEVELOPMENTAL STAGE</scope>
    <scope>INTERACTION WITH SAX-3 AND SLT-1</scope>
</reference>
<reference key="3">
    <citation type="journal article" date="2014" name="PLoS Genet.">
        <title>EVA-1 functions as an UNC-40 Co-receptor to enhance attraction to the MADD-4 guidance cue in Caenorhabditis elegans.</title>
        <authorList>
            <person name="Chan K.K."/>
            <person name="Seetharaman A."/>
            <person name="Bagg R."/>
            <person name="Selman G."/>
            <person name="Zhang Y."/>
            <person name="Kim J."/>
            <person name="Roy P.J."/>
        </authorList>
    </citation>
    <scope>FUNCTION</scope>
    <scope>INTERACTION WITH MADD-4; SLT-1 AND UNC-40</scope>
    <scope>DOMAIN</scope>
</reference>